<reference key="1">
    <citation type="submission" date="2008-05" db="EMBL/GenBank/DDBJ databases">
        <title>Genome sequence of Helicobacter pylori from the remote Amazon: traces of Asian ancestry of the first Americans.</title>
        <authorList>
            <person name="Kersulyte D."/>
            <person name="Kalia A."/>
            <person name="Gilman R.H."/>
            <person name="Berg D.E."/>
        </authorList>
    </citation>
    <scope>NUCLEOTIDE SEQUENCE [LARGE SCALE GENOMIC DNA]</scope>
    <source>
        <strain>Shi470</strain>
    </source>
</reference>
<sequence>MVNDIIADSLTRLRNASMRRLEFTQLYYAKIVVSILEIFKEKGFIKDFNVKDKDKKQSVYVQLAYDEKGHSKISEVKRLSKPGRRVYKQKNELKRFKNGYGVIVVSTSKGVITNEEAYRQNVGGEVLCSIW</sequence>
<accession>B2UV68</accession>
<proteinExistence type="inferred from homology"/>
<evidence type="ECO:0000255" key="1">
    <source>
        <dbReference type="HAMAP-Rule" id="MF_01302"/>
    </source>
</evidence>
<evidence type="ECO:0000305" key="2"/>
<dbReference type="EMBL" id="CP001072">
    <property type="protein sequence ID" value="ACD48750.1"/>
    <property type="molecule type" value="Genomic_DNA"/>
</dbReference>
<dbReference type="RefSeq" id="WP_000245805.1">
    <property type="nucleotide sequence ID" value="NC_010698.2"/>
</dbReference>
<dbReference type="SMR" id="B2UV68"/>
<dbReference type="GeneID" id="93237564"/>
<dbReference type="KEGG" id="hps:HPSH_06750"/>
<dbReference type="HOGENOM" id="CLU_098428_0_2_7"/>
<dbReference type="GO" id="GO:1990904">
    <property type="term" value="C:ribonucleoprotein complex"/>
    <property type="evidence" value="ECO:0007669"/>
    <property type="project" value="UniProtKB-KW"/>
</dbReference>
<dbReference type="GO" id="GO:0005840">
    <property type="term" value="C:ribosome"/>
    <property type="evidence" value="ECO:0007669"/>
    <property type="project" value="UniProtKB-KW"/>
</dbReference>
<dbReference type="GO" id="GO:0019843">
    <property type="term" value="F:rRNA binding"/>
    <property type="evidence" value="ECO:0007669"/>
    <property type="project" value="UniProtKB-UniRule"/>
</dbReference>
<dbReference type="GO" id="GO:0003735">
    <property type="term" value="F:structural constituent of ribosome"/>
    <property type="evidence" value="ECO:0007669"/>
    <property type="project" value="InterPro"/>
</dbReference>
<dbReference type="GO" id="GO:0006412">
    <property type="term" value="P:translation"/>
    <property type="evidence" value="ECO:0007669"/>
    <property type="project" value="UniProtKB-UniRule"/>
</dbReference>
<dbReference type="FunFam" id="3.30.1370.30:FF:000002">
    <property type="entry name" value="30S ribosomal protein S8"/>
    <property type="match status" value="1"/>
</dbReference>
<dbReference type="FunFam" id="3.30.1490.10:FF:000001">
    <property type="entry name" value="30S ribosomal protein S8"/>
    <property type="match status" value="1"/>
</dbReference>
<dbReference type="Gene3D" id="3.30.1370.30">
    <property type="match status" value="1"/>
</dbReference>
<dbReference type="Gene3D" id="3.30.1490.10">
    <property type="match status" value="1"/>
</dbReference>
<dbReference type="HAMAP" id="MF_01302_B">
    <property type="entry name" value="Ribosomal_uS8_B"/>
    <property type="match status" value="1"/>
</dbReference>
<dbReference type="InterPro" id="IPR000630">
    <property type="entry name" value="Ribosomal_uS8"/>
</dbReference>
<dbReference type="InterPro" id="IPR047863">
    <property type="entry name" value="Ribosomal_uS8_CS"/>
</dbReference>
<dbReference type="InterPro" id="IPR035987">
    <property type="entry name" value="Ribosomal_uS8_sf"/>
</dbReference>
<dbReference type="NCBIfam" id="NF001109">
    <property type="entry name" value="PRK00136.1"/>
    <property type="match status" value="1"/>
</dbReference>
<dbReference type="PANTHER" id="PTHR11758">
    <property type="entry name" value="40S RIBOSOMAL PROTEIN S15A"/>
    <property type="match status" value="1"/>
</dbReference>
<dbReference type="Pfam" id="PF00410">
    <property type="entry name" value="Ribosomal_S8"/>
    <property type="match status" value="1"/>
</dbReference>
<dbReference type="SUPFAM" id="SSF56047">
    <property type="entry name" value="Ribosomal protein S8"/>
    <property type="match status" value="1"/>
</dbReference>
<dbReference type="PROSITE" id="PS00053">
    <property type="entry name" value="RIBOSOMAL_S8"/>
    <property type="match status" value="1"/>
</dbReference>
<keyword id="KW-0687">Ribonucleoprotein</keyword>
<keyword id="KW-0689">Ribosomal protein</keyword>
<keyword id="KW-0694">RNA-binding</keyword>
<keyword id="KW-0699">rRNA-binding</keyword>
<gene>
    <name evidence="1" type="primary">rpsH</name>
    <name type="ordered locus">HPSH_06750</name>
</gene>
<protein>
    <recommendedName>
        <fullName evidence="1">Small ribosomal subunit protein uS8</fullName>
    </recommendedName>
    <alternativeName>
        <fullName evidence="2">30S ribosomal protein S8</fullName>
    </alternativeName>
</protein>
<feature type="chain" id="PRO_1000140567" description="Small ribosomal subunit protein uS8">
    <location>
        <begin position="1"/>
        <end position="131"/>
    </location>
</feature>
<comment type="function">
    <text evidence="1">One of the primary rRNA binding proteins, it binds directly to 16S rRNA central domain where it helps coordinate assembly of the platform of the 30S subunit.</text>
</comment>
<comment type="subunit">
    <text evidence="1">Part of the 30S ribosomal subunit. Contacts proteins S5 and S12.</text>
</comment>
<comment type="similarity">
    <text evidence="1">Belongs to the universal ribosomal protein uS8 family.</text>
</comment>
<organism>
    <name type="scientific">Helicobacter pylori (strain Shi470)</name>
    <dbReference type="NCBI Taxonomy" id="512562"/>
    <lineage>
        <taxon>Bacteria</taxon>
        <taxon>Pseudomonadati</taxon>
        <taxon>Campylobacterota</taxon>
        <taxon>Epsilonproteobacteria</taxon>
        <taxon>Campylobacterales</taxon>
        <taxon>Helicobacteraceae</taxon>
        <taxon>Helicobacter</taxon>
    </lineage>
</organism>
<name>RS8_HELPS</name>